<name>PURA_STAAN</name>
<reference key="1">
    <citation type="journal article" date="2001" name="Lancet">
        <title>Whole genome sequencing of meticillin-resistant Staphylococcus aureus.</title>
        <authorList>
            <person name="Kuroda M."/>
            <person name="Ohta T."/>
            <person name="Uchiyama I."/>
            <person name="Baba T."/>
            <person name="Yuzawa H."/>
            <person name="Kobayashi I."/>
            <person name="Cui L."/>
            <person name="Oguchi A."/>
            <person name="Aoki K."/>
            <person name="Nagai Y."/>
            <person name="Lian J.-Q."/>
            <person name="Ito T."/>
            <person name="Kanamori M."/>
            <person name="Matsumaru H."/>
            <person name="Maruyama A."/>
            <person name="Murakami H."/>
            <person name="Hosoyama A."/>
            <person name="Mizutani-Ui Y."/>
            <person name="Takahashi N.K."/>
            <person name="Sawano T."/>
            <person name="Inoue R."/>
            <person name="Kaito C."/>
            <person name="Sekimizu K."/>
            <person name="Hirakawa H."/>
            <person name="Kuhara S."/>
            <person name="Goto S."/>
            <person name="Yabuzaki J."/>
            <person name="Kanehisa M."/>
            <person name="Yamashita A."/>
            <person name="Oshima K."/>
            <person name="Furuya K."/>
            <person name="Yoshino C."/>
            <person name="Shiba T."/>
            <person name="Hattori M."/>
            <person name="Ogasawara N."/>
            <person name="Hayashi H."/>
            <person name="Hiramatsu K."/>
        </authorList>
    </citation>
    <scope>NUCLEOTIDE SEQUENCE [LARGE SCALE GENOMIC DNA]</scope>
    <source>
        <strain>N315</strain>
    </source>
</reference>
<reference key="2">
    <citation type="journal article" date="2005" name="J. Microbiol. Methods">
        <title>Correlation of proteomic and transcriptomic profiles of Staphylococcus aureus during the post-exponential phase of growth.</title>
        <authorList>
            <person name="Scherl A."/>
            <person name="Francois P."/>
            <person name="Bento M."/>
            <person name="Deshusses J.M."/>
            <person name="Charbonnier Y."/>
            <person name="Converset V."/>
            <person name="Huyghe A."/>
            <person name="Walter N."/>
            <person name="Hoogland C."/>
            <person name="Appel R.D."/>
            <person name="Sanchez J.-C."/>
            <person name="Zimmermann-Ivol C.G."/>
            <person name="Corthals G.L."/>
            <person name="Hochstrasser D.F."/>
            <person name="Schrenzel J."/>
        </authorList>
    </citation>
    <scope>IDENTIFICATION BY MASS SPECTROMETRY</scope>
    <source>
        <strain>N315</strain>
    </source>
</reference>
<reference key="3">
    <citation type="submission" date="2007-10" db="UniProtKB">
        <title>Shotgun proteomic analysis of total and membrane protein extracts of S. aureus strain N315.</title>
        <authorList>
            <person name="Vaezzadeh A.R."/>
            <person name="Deshusses J."/>
            <person name="Lescuyer P."/>
            <person name="Hochstrasser D.F."/>
        </authorList>
    </citation>
    <scope>IDENTIFICATION BY MASS SPECTROMETRY [LARGE SCALE ANALYSIS]</scope>
    <source>
        <strain>N315</strain>
    </source>
</reference>
<keyword id="KW-0963">Cytoplasm</keyword>
<keyword id="KW-0342">GTP-binding</keyword>
<keyword id="KW-0436">Ligase</keyword>
<keyword id="KW-0460">Magnesium</keyword>
<keyword id="KW-0479">Metal-binding</keyword>
<keyword id="KW-0547">Nucleotide-binding</keyword>
<keyword id="KW-0658">Purine biosynthesis</keyword>
<feature type="chain" id="PRO_0000095228" description="Adenylosuccinate synthetase">
    <location>
        <begin position="1"/>
        <end position="427"/>
    </location>
</feature>
<feature type="active site" description="Proton acceptor" evidence="1">
    <location>
        <position position="13"/>
    </location>
</feature>
<feature type="active site" description="Proton donor" evidence="1">
    <location>
        <position position="41"/>
    </location>
</feature>
<feature type="binding site" evidence="1">
    <location>
        <begin position="12"/>
        <end position="18"/>
    </location>
    <ligand>
        <name>GTP</name>
        <dbReference type="ChEBI" id="CHEBI:37565"/>
    </ligand>
</feature>
<feature type="binding site" description="in other chain" evidence="1">
    <location>
        <begin position="13"/>
        <end position="16"/>
    </location>
    <ligand>
        <name>IMP</name>
        <dbReference type="ChEBI" id="CHEBI:58053"/>
        <note>ligand shared between dimeric partners</note>
    </ligand>
</feature>
<feature type="binding site" evidence="1">
    <location>
        <position position="13"/>
    </location>
    <ligand>
        <name>Mg(2+)</name>
        <dbReference type="ChEBI" id="CHEBI:18420"/>
    </ligand>
</feature>
<feature type="binding site" description="in other chain" evidence="1">
    <location>
        <begin position="38"/>
        <end position="41"/>
    </location>
    <ligand>
        <name>IMP</name>
        <dbReference type="ChEBI" id="CHEBI:58053"/>
        <note>ligand shared between dimeric partners</note>
    </ligand>
</feature>
<feature type="binding site" evidence="1">
    <location>
        <begin position="40"/>
        <end position="42"/>
    </location>
    <ligand>
        <name>GTP</name>
        <dbReference type="ChEBI" id="CHEBI:37565"/>
    </ligand>
</feature>
<feature type="binding site" evidence="1">
    <location>
        <position position="40"/>
    </location>
    <ligand>
        <name>Mg(2+)</name>
        <dbReference type="ChEBI" id="CHEBI:18420"/>
    </ligand>
</feature>
<feature type="binding site" description="in other chain" evidence="1">
    <location>
        <position position="128"/>
    </location>
    <ligand>
        <name>IMP</name>
        <dbReference type="ChEBI" id="CHEBI:58053"/>
        <note>ligand shared between dimeric partners</note>
    </ligand>
</feature>
<feature type="binding site" evidence="1">
    <location>
        <position position="142"/>
    </location>
    <ligand>
        <name>IMP</name>
        <dbReference type="ChEBI" id="CHEBI:58053"/>
        <note>ligand shared between dimeric partners</note>
    </ligand>
</feature>
<feature type="binding site" description="in other chain" evidence="1">
    <location>
        <position position="223"/>
    </location>
    <ligand>
        <name>IMP</name>
        <dbReference type="ChEBI" id="CHEBI:58053"/>
        <note>ligand shared between dimeric partners</note>
    </ligand>
</feature>
<feature type="binding site" description="in other chain" evidence="1">
    <location>
        <position position="238"/>
    </location>
    <ligand>
        <name>IMP</name>
        <dbReference type="ChEBI" id="CHEBI:58053"/>
        <note>ligand shared between dimeric partners</note>
    </ligand>
</feature>
<feature type="binding site" evidence="1">
    <location>
        <begin position="298"/>
        <end position="304"/>
    </location>
    <ligand>
        <name>substrate</name>
    </ligand>
</feature>
<feature type="binding site" description="in other chain" evidence="1">
    <location>
        <position position="302"/>
    </location>
    <ligand>
        <name>IMP</name>
        <dbReference type="ChEBI" id="CHEBI:58053"/>
        <note>ligand shared between dimeric partners</note>
    </ligand>
</feature>
<feature type="binding site" evidence="1">
    <location>
        <position position="304"/>
    </location>
    <ligand>
        <name>GTP</name>
        <dbReference type="ChEBI" id="CHEBI:37565"/>
    </ligand>
</feature>
<feature type="binding site" evidence="1">
    <location>
        <begin position="330"/>
        <end position="332"/>
    </location>
    <ligand>
        <name>GTP</name>
        <dbReference type="ChEBI" id="CHEBI:37565"/>
    </ligand>
</feature>
<feature type="binding site" evidence="1">
    <location>
        <begin position="412"/>
        <end position="414"/>
    </location>
    <ligand>
        <name>GTP</name>
        <dbReference type="ChEBI" id="CHEBI:37565"/>
    </ligand>
</feature>
<proteinExistence type="evidence at protein level"/>
<gene>
    <name evidence="1" type="primary">purA</name>
    <name type="ordered locus">SA0016</name>
</gene>
<evidence type="ECO:0000255" key="1">
    <source>
        <dbReference type="HAMAP-Rule" id="MF_00011"/>
    </source>
</evidence>
<protein>
    <recommendedName>
        <fullName evidence="1">Adenylosuccinate synthetase</fullName>
        <shortName evidence="1">AMPSase</shortName>
        <shortName evidence="1">AdSS</shortName>
        <ecNumber evidence="1">6.3.4.4</ecNumber>
    </recommendedName>
    <alternativeName>
        <fullName evidence="1">IMP--aspartate ligase</fullName>
    </alternativeName>
</protein>
<comment type="function">
    <text evidence="1">Plays an important role in the de novo pathway of purine nucleotide biosynthesis. Catalyzes the first committed step in the biosynthesis of AMP from IMP.</text>
</comment>
<comment type="catalytic activity">
    <reaction evidence="1">
        <text>IMP + L-aspartate + GTP = N(6)-(1,2-dicarboxyethyl)-AMP + GDP + phosphate + 2 H(+)</text>
        <dbReference type="Rhea" id="RHEA:15753"/>
        <dbReference type="ChEBI" id="CHEBI:15378"/>
        <dbReference type="ChEBI" id="CHEBI:29991"/>
        <dbReference type="ChEBI" id="CHEBI:37565"/>
        <dbReference type="ChEBI" id="CHEBI:43474"/>
        <dbReference type="ChEBI" id="CHEBI:57567"/>
        <dbReference type="ChEBI" id="CHEBI:58053"/>
        <dbReference type="ChEBI" id="CHEBI:58189"/>
        <dbReference type="EC" id="6.3.4.4"/>
    </reaction>
</comment>
<comment type="cofactor">
    <cofactor evidence="1">
        <name>Mg(2+)</name>
        <dbReference type="ChEBI" id="CHEBI:18420"/>
    </cofactor>
    <text evidence="1">Binds 1 Mg(2+) ion per subunit.</text>
</comment>
<comment type="pathway">
    <text evidence="1">Purine metabolism; AMP biosynthesis via de novo pathway; AMP from IMP: step 1/2.</text>
</comment>
<comment type="subunit">
    <text evidence="1">Homodimer.</text>
</comment>
<comment type="subcellular location">
    <subcellularLocation>
        <location evidence="1">Cytoplasm</location>
    </subcellularLocation>
</comment>
<comment type="similarity">
    <text evidence="1">Belongs to the adenylosuccinate synthetase family.</text>
</comment>
<accession>P99099</accession>
<accession>Q99XF4</accession>
<dbReference type="EC" id="6.3.4.4" evidence="1"/>
<dbReference type="EMBL" id="BA000018">
    <property type="protein sequence ID" value="BAB41233.1"/>
    <property type="molecule type" value="Genomic_DNA"/>
</dbReference>
<dbReference type="PIR" id="A89760">
    <property type="entry name" value="A89760"/>
</dbReference>
<dbReference type="RefSeq" id="WP_000095328.1">
    <property type="nucleotide sequence ID" value="NC_002745.2"/>
</dbReference>
<dbReference type="SMR" id="P99099"/>
<dbReference type="EnsemblBacteria" id="BAB41233">
    <property type="protein sequence ID" value="BAB41233"/>
    <property type="gene ID" value="BAB41233"/>
</dbReference>
<dbReference type="KEGG" id="sau:SA0016"/>
<dbReference type="HOGENOM" id="CLU_029848_0_0_9"/>
<dbReference type="UniPathway" id="UPA00075">
    <property type="reaction ID" value="UER00335"/>
</dbReference>
<dbReference type="GO" id="GO:0005737">
    <property type="term" value="C:cytoplasm"/>
    <property type="evidence" value="ECO:0007669"/>
    <property type="project" value="UniProtKB-SubCell"/>
</dbReference>
<dbReference type="GO" id="GO:0004019">
    <property type="term" value="F:adenylosuccinate synthase activity"/>
    <property type="evidence" value="ECO:0007669"/>
    <property type="project" value="UniProtKB-UniRule"/>
</dbReference>
<dbReference type="GO" id="GO:0005525">
    <property type="term" value="F:GTP binding"/>
    <property type="evidence" value="ECO:0007669"/>
    <property type="project" value="UniProtKB-UniRule"/>
</dbReference>
<dbReference type="GO" id="GO:0000287">
    <property type="term" value="F:magnesium ion binding"/>
    <property type="evidence" value="ECO:0007669"/>
    <property type="project" value="UniProtKB-UniRule"/>
</dbReference>
<dbReference type="GO" id="GO:0044208">
    <property type="term" value="P:'de novo' AMP biosynthetic process"/>
    <property type="evidence" value="ECO:0007669"/>
    <property type="project" value="UniProtKB-UniRule"/>
</dbReference>
<dbReference type="GO" id="GO:0046040">
    <property type="term" value="P:IMP metabolic process"/>
    <property type="evidence" value="ECO:0007669"/>
    <property type="project" value="TreeGrafter"/>
</dbReference>
<dbReference type="CDD" id="cd03108">
    <property type="entry name" value="AdSS"/>
    <property type="match status" value="1"/>
</dbReference>
<dbReference type="FunFam" id="1.10.300.10:FF:000001">
    <property type="entry name" value="Adenylosuccinate synthetase"/>
    <property type="match status" value="1"/>
</dbReference>
<dbReference type="FunFam" id="3.90.170.10:FF:000001">
    <property type="entry name" value="Adenylosuccinate synthetase"/>
    <property type="match status" value="1"/>
</dbReference>
<dbReference type="Gene3D" id="3.40.440.10">
    <property type="entry name" value="Adenylosuccinate Synthetase, subunit A, domain 1"/>
    <property type="match status" value="1"/>
</dbReference>
<dbReference type="Gene3D" id="1.10.300.10">
    <property type="entry name" value="Adenylosuccinate Synthetase, subunit A, domain 2"/>
    <property type="match status" value="1"/>
</dbReference>
<dbReference type="Gene3D" id="3.90.170.10">
    <property type="entry name" value="Adenylosuccinate Synthetase, subunit A, domain 3"/>
    <property type="match status" value="1"/>
</dbReference>
<dbReference type="HAMAP" id="MF_00011">
    <property type="entry name" value="Adenylosucc_synth"/>
    <property type="match status" value="1"/>
</dbReference>
<dbReference type="InterPro" id="IPR018220">
    <property type="entry name" value="Adenylosuccin_syn_GTP-bd"/>
</dbReference>
<dbReference type="InterPro" id="IPR033128">
    <property type="entry name" value="Adenylosuccin_syn_Lys_AS"/>
</dbReference>
<dbReference type="InterPro" id="IPR042109">
    <property type="entry name" value="Adenylosuccinate_synth_dom1"/>
</dbReference>
<dbReference type="InterPro" id="IPR042110">
    <property type="entry name" value="Adenylosuccinate_synth_dom2"/>
</dbReference>
<dbReference type="InterPro" id="IPR042111">
    <property type="entry name" value="Adenylosuccinate_synth_dom3"/>
</dbReference>
<dbReference type="InterPro" id="IPR001114">
    <property type="entry name" value="Adenylosuccinate_synthetase"/>
</dbReference>
<dbReference type="InterPro" id="IPR027417">
    <property type="entry name" value="P-loop_NTPase"/>
</dbReference>
<dbReference type="NCBIfam" id="NF002223">
    <property type="entry name" value="PRK01117.1"/>
    <property type="match status" value="1"/>
</dbReference>
<dbReference type="NCBIfam" id="TIGR00184">
    <property type="entry name" value="purA"/>
    <property type="match status" value="1"/>
</dbReference>
<dbReference type="PANTHER" id="PTHR11846">
    <property type="entry name" value="ADENYLOSUCCINATE SYNTHETASE"/>
    <property type="match status" value="1"/>
</dbReference>
<dbReference type="PANTHER" id="PTHR11846:SF0">
    <property type="entry name" value="ADENYLOSUCCINATE SYNTHETASE"/>
    <property type="match status" value="1"/>
</dbReference>
<dbReference type="Pfam" id="PF00709">
    <property type="entry name" value="Adenylsucc_synt"/>
    <property type="match status" value="1"/>
</dbReference>
<dbReference type="SMART" id="SM00788">
    <property type="entry name" value="Adenylsucc_synt"/>
    <property type="match status" value="1"/>
</dbReference>
<dbReference type="SUPFAM" id="SSF52540">
    <property type="entry name" value="P-loop containing nucleoside triphosphate hydrolases"/>
    <property type="match status" value="1"/>
</dbReference>
<dbReference type="PROSITE" id="PS01266">
    <property type="entry name" value="ADENYLOSUCCIN_SYN_1"/>
    <property type="match status" value="1"/>
</dbReference>
<dbReference type="PROSITE" id="PS00513">
    <property type="entry name" value="ADENYLOSUCCIN_SYN_2"/>
    <property type="match status" value="1"/>
</dbReference>
<sequence length="427" mass="47552">MSSIVVVGTQWGDEGKGKITDFLAEQSDVIARFSGGNNAGHTIQFGGETYKLHLVPSGIFYKDKLAVIGNGVVVDPVALLKELDGLNERGIPTSNLRISNRAQVILPYHLAQDEYEERLRGDNKIGTTKKGIGPAYVDKVQRIGIRMADLLEKETFERLLKSNIEYKQAYFKGMFNETCPSFDDIFEEYYAAGQRLKEFVTDTSKILDDAFVADEKVLFEGAQGVMLDIDHGTYPFVTSSNPIAGNVTVGTGVGPTFVSKVIGVCKAYTSRVGDGPFPTELFDEDGHHIREVGREYGTTTGRPRRVGWFDSVVLRHSRRVSGITDLSINSIDVLTGLDTVKICTAYELDGKEITEYPANLDQLKRCKPIFEELPGWTEDVTSVRTLEELPENARKYLERISELCNVQISIFSVGPDREQTNLLKELW</sequence>
<organism>
    <name type="scientific">Staphylococcus aureus (strain N315)</name>
    <dbReference type="NCBI Taxonomy" id="158879"/>
    <lineage>
        <taxon>Bacteria</taxon>
        <taxon>Bacillati</taxon>
        <taxon>Bacillota</taxon>
        <taxon>Bacilli</taxon>
        <taxon>Bacillales</taxon>
        <taxon>Staphylococcaceae</taxon>
        <taxon>Staphylococcus</taxon>
    </lineage>
</organism>